<dbReference type="EC" id="3.6.4.13" evidence="8"/>
<dbReference type="EMBL" id="AC055713">
    <property type="status" value="NOT_ANNOTATED_CDS"/>
    <property type="molecule type" value="Genomic_DNA"/>
</dbReference>
<dbReference type="EMBL" id="AC117503">
    <property type="status" value="NOT_ANNOTATED_CDS"/>
    <property type="molecule type" value="Genomic_DNA"/>
</dbReference>
<dbReference type="EMBL" id="BC030020">
    <property type="protein sequence ID" value="AAH30020.1"/>
    <property type="molecule type" value="mRNA"/>
</dbReference>
<dbReference type="EMBL" id="BC035911">
    <property type="protein sequence ID" value="AAH35911.1"/>
    <property type="molecule type" value="mRNA"/>
</dbReference>
<dbReference type="EMBL" id="AL833756">
    <property type="protein sequence ID" value="CAH56233.1"/>
    <property type="molecule type" value="mRNA"/>
</dbReference>
<dbReference type="EMBL" id="AB046815">
    <property type="protein sequence ID" value="BAB13421.1"/>
    <property type="molecule type" value="mRNA"/>
</dbReference>
<dbReference type="CCDS" id="CCDS9251.1">
    <molecule id="Q8NHQ9-1"/>
</dbReference>
<dbReference type="RefSeq" id="NP_065987.1">
    <molecule id="Q8NHQ9-1"/>
    <property type="nucleotide sequence ID" value="NM_020936.3"/>
</dbReference>
<dbReference type="SMR" id="Q8NHQ9"/>
<dbReference type="BioGRID" id="121721">
    <property type="interactions" value="215"/>
</dbReference>
<dbReference type="FunCoup" id="Q8NHQ9">
    <property type="interactions" value="3805"/>
</dbReference>
<dbReference type="IntAct" id="Q8NHQ9">
    <property type="interactions" value="225"/>
</dbReference>
<dbReference type="MINT" id="Q8NHQ9"/>
<dbReference type="STRING" id="9606.ENSP00000238146"/>
<dbReference type="GlyGen" id="Q8NHQ9">
    <property type="glycosylation" value="1 site, 1 O-linked glycan (1 site)"/>
</dbReference>
<dbReference type="iPTMnet" id="Q8NHQ9"/>
<dbReference type="PhosphoSitePlus" id="Q8NHQ9"/>
<dbReference type="SwissPalm" id="Q8NHQ9"/>
<dbReference type="BioMuta" id="DDX55"/>
<dbReference type="DMDM" id="296439376"/>
<dbReference type="jPOST" id="Q8NHQ9"/>
<dbReference type="MassIVE" id="Q8NHQ9"/>
<dbReference type="PaxDb" id="9606-ENSP00000238146"/>
<dbReference type="PeptideAtlas" id="Q8NHQ9"/>
<dbReference type="ProteomicsDB" id="71173"/>
<dbReference type="ProteomicsDB" id="73741">
    <molecule id="Q8NHQ9-1"/>
</dbReference>
<dbReference type="Pumba" id="Q8NHQ9"/>
<dbReference type="Antibodypedia" id="19284">
    <property type="antibodies" value="162 antibodies from 25 providers"/>
</dbReference>
<dbReference type="DNASU" id="57696"/>
<dbReference type="Ensembl" id="ENST00000238146.9">
    <molecule id="Q8NHQ9-1"/>
    <property type="protein sequence ID" value="ENSP00000238146.3"/>
    <property type="gene ID" value="ENSG00000111364.16"/>
</dbReference>
<dbReference type="Ensembl" id="ENST00000421670.3">
    <molecule id="Q8NHQ9-2"/>
    <property type="protein sequence ID" value="ENSP00000442332.1"/>
    <property type="gene ID" value="ENSG00000111364.16"/>
</dbReference>
<dbReference type="GeneID" id="57696"/>
<dbReference type="KEGG" id="hsa:57696"/>
<dbReference type="MANE-Select" id="ENST00000238146.9">
    <property type="protein sequence ID" value="ENSP00000238146.3"/>
    <property type="RefSeq nucleotide sequence ID" value="NM_020936.3"/>
    <property type="RefSeq protein sequence ID" value="NP_065987.1"/>
</dbReference>
<dbReference type="UCSC" id="uc001ufi.4">
    <molecule id="Q8NHQ9-1"/>
    <property type="organism name" value="human"/>
</dbReference>
<dbReference type="AGR" id="HGNC:20085"/>
<dbReference type="CTD" id="57696"/>
<dbReference type="DisGeNET" id="57696"/>
<dbReference type="GeneCards" id="DDX55"/>
<dbReference type="HGNC" id="HGNC:20085">
    <property type="gene designation" value="DDX55"/>
</dbReference>
<dbReference type="HPA" id="ENSG00000111364">
    <property type="expression patterns" value="Low tissue specificity"/>
</dbReference>
<dbReference type="MIM" id="620176">
    <property type="type" value="gene"/>
</dbReference>
<dbReference type="neXtProt" id="NX_Q8NHQ9"/>
<dbReference type="OpenTargets" id="ENSG00000111364"/>
<dbReference type="PharmGKB" id="PA134984021"/>
<dbReference type="VEuPathDB" id="HostDB:ENSG00000111364"/>
<dbReference type="eggNOG" id="KOG0331">
    <property type="taxonomic scope" value="Eukaryota"/>
</dbReference>
<dbReference type="eggNOG" id="KOG0345">
    <property type="taxonomic scope" value="Eukaryota"/>
</dbReference>
<dbReference type="GeneTree" id="ENSGT00550000074969"/>
<dbReference type="HOGENOM" id="CLU_003041_26_4_1"/>
<dbReference type="InParanoid" id="Q8NHQ9"/>
<dbReference type="OMA" id="AYKEHEC"/>
<dbReference type="OrthoDB" id="7396459at2759"/>
<dbReference type="PAN-GO" id="Q8NHQ9">
    <property type="GO annotations" value="1 GO annotation based on evolutionary models"/>
</dbReference>
<dbReference type="PhylomeDB" id="Q8NHQ9"/>
<dbReference type="TreeFam" id="TF314573"/>
<dbReference type="PathwayCommons" id="Q8NHQ9"/>
<dbReference type="SignaLink" id="Q8NHQ9"/>
<dbReference type="BioGRID-ORCS" id="57696">
    <property type="hits" value="578 hits in 1155 CRISPR screens"/>
</dbReference>
<dbReference type="CD-CODE" id="91857CE7">
    <property type="entry name" value="Nucleolus"/>
</dbReference>
<dbReference type="ChiTaRS" id="DDX55">
    <property type="organism name" value="human"/>
</dbReference>
<dbReference type="GenomeRNAi" id="57696"/>
<dbReference type="Pharos" id="Q8NHQ9">
    <property type="development level" value="Tdark"/>
</dbReference>
<dbReference type="PRO" id="PR:Q8NHQ9"/>
<dbReference type="Proteomes" id="UP000005640">
    <property type="component" value="Chromosome 12"/>
</dbReference>
<dbReference type="RNAct" id="Q8NHQ9">
    <property type="molecule type" value="protein"/>
</dbReference>
<dbReference type="Bgee" id="ENSG00000111364">
    <property type="expression patterns" value="Expressed in sural nerve and 168 other cell types or tissues"/>
</dbReference>
<dbReference type="ExpressionAtlas" id="Q8NHQ9">
    <property type="expression patterns" value="baseline and differential"/>
</dbReference>
<dbReference type="GO" id="GO:0005829">
    <property type="term" value="C:cytosol"/>
    <property type="evidence" value="ECO:0000314"/>
    <property type="project" value="HPA"/>
</dbReference>
<dbReference type="GO" id="GO:0016020">
    <property type="term" value="C:membrane"/>
    <property type="evidence" value="ECO:0007005"/>
    <property type="project" value="UniProtKB"/>
</dbReference>
<dbReference type="GO" id="GO:0005730">
    <property type="term" value="C:nucleolus"/>
    <property type="evidence" value="ECO:0000314"/>
    <property type="project" value="HPA"/>
</dbReference>
<dbReference type="GO" id="GO:0005654">
    <property type="term" value="C:nucleoplasm"/>
    <property type="evidence" value="ECO:0000314"/>
    <property type="project" value="HPA"/>
</dbReference>
<dbReference type="GO" id="GO:0005524">
    <property type="term" value="F:ATP binding"/>
    <property type="evidence" value="ECO:0007669"/>
    <property type="project" value="UniProtKB-KW"/>
</dbReference>
<dbReference type="GO" id="GO:0016887">
    <property type="term" value="F:ATP hydrolysis activity"/>
    <property type="evidence" value="ECO:0007669"/>
    <property type="project" value="RHEA"/>
</dbReference>
<dbReference type="GO" id="GO:0003723">
    <property type="term" value="F:RNA binding"/>
    <property type="evidence" value="ECO:0007005"/>
    <property type="project" value="UniProtKB"/>
</dbReference>
<dbReference type="GO" id="GO:0003724">
    <property type="term" value="F:RNA helicase activity"/>
    <property type="evidence" value="ECO:0007669"/>
    <property type="project" value="UniProtKB-EC"/>
</dbReference>
<dbReference type="CDD" id="cd17960">
    <property type="entry name" value="DEADc_DDX55"/>
    <property type="match status" value="1"/>
</dbReference>
<dbReference type="CDD" id="cd18787">
    <property type="entry name" value="SF2_C_DEAD"/>
    <property type="match status" value="1"/>
</dbReference>
<dbReference type="FunFam" id="3.40.50.300:FF:000877">
    <property type="entry name" value="RNA helicase"/>
    <property type="match status" value="1"/>
</dbReference>
<dbReference type="FunFam" id="3.40.50.300:FF:001022">
    <property type="entry name" value="RNA helicase"/>
    <property type="match status" value="1"/>
</dbReference>
<dbReference type="Gene3D" id="3.40.50.300">
    <property type="entry name" value="P-loop containing nucleotide triphosphate hydrolases"/>
    <property type="match status" value="2"/>
</dbReference>
<dbReference type="InterPro" id="IPR011545">
    <property type="entry name" value="DEAD/DEAH_box_helicase_dom"/>
</dbReference>
<dbReference type="InterPro" id="IPR014001">
    <property type="entry name" value="Helicase_ATP-bd"/>
</dbReference>
<dbReference type="InterPro" id="IPR001650">
    <property type="entry name" value="Helicase_C-like"/>
</dbReference>
<dbReference type="InterPro" id="IPR027417">
    <property type="entry name" value="P-loop_NTPase"/>
</dbReference>
<dbReference type="InterPro" id="IPR000629">
    <property type="entry name" value="RNA-helicase_DEAD-box_CS"/>
</dbReference>
<dbReference type="InterPro" id="IPR014014">
    <property type="entry name" value="RNA_helicase_DEAD_Q_motif"/>
</dbReference>
<dbReference type="InterPro" id="IPR025313">
    <property type="entry name" value="SPB4-like_CTE"/>
</dbReference>
<dbReference type="PANTHER" id="PTHR24031">
    <property type="entry name" value="RNA HELICASE"/>
    <property type="match status" value="1"/>
</dbReference>
<dbReference type="Pfam" id="PF13959">
    <property type="entry name" value="CTE_SPB4"/>
    <property type="match status" value="1"/>
</dbReference>
<dbReference type="Pfam" id="PF00270">
    <property type="entry name" value="DEAD"/>
    <property type="match status" value="1"/>
</dbReference>
<dbReference type="Pfam" id="PF00271">
    <property type="entry name" value="Helicase_C"/>
    <property type="match status" value="1"/>
</dbReference>
<dbReference type="SMART" id="SM00487">
    <property type="entry name" value="DEXDc"/>
    <property type="match status" value="1"/>
</dbReference>
<dbReference type="SMART" id="SM01178">
    <property type="entry name" value="DUF4217"/>
    <property type="match status" value="1"/>
</dbReference>
<dbReference type="SMART" id="SM00490">
    <property type="entry name" value="HELICc"/>
    <property type="match status" value="1"/>
</dbReference>
<dbReference type="SUPFAM" id="SSF52540">
    <property type="entry name" value="P-loop containing nucleoside triphosphate hydrolases"/>
    <property type="match status" value="1"/>
</dbReference>
<dbReference type="PROSITE" id="PS00039">
    <property type="entry name" value="DEAD_ATP_HELICASE"/>
    <property type="match status" value="1"/>
</dbReference>
<dbReference type="PROSITE" id="PS51192">
    <property type="entry name" value="HELICASE_ATP_BIND_1"/>
    <property type="match status" value="1"/>
</dbReference>
<dbReference type="PROSITE" id="PS51194">
    <property type="entry name" value="HELICASE_CTER"/>
    <property type="match status" value="1"/>
</dbReference>
<dbReference type="PROSITE" id="PS51195">
    <property type="entry name" value="Q_MOTIF"/>
    <property type="match status" value="1"/>
</dbReference>
<gene>
    <name evidence="9" type="primary">DDX55</name>
    <name type="synonym">KIAA1595</name>
</gene>
<organism>
    <name type="scientific">Homo sapiens</name>
    <name type="common">Human</name>
    <dbReference type="NCBI Taxonomy" id="9606"/>
    <lineage>
        <taxon>Eukaryota</taxon>
        <taxon>Metazoa</taxon>
        <taxon>Chordata</taxon>
        <taxon>Craniata</taxon>
        <taxon>Vertebrata</taxon>
        <taxon>Euteleostomi</taxon>
        <taxon>Mammalia</taxon>
        <taxon>Eutheria</taxon>
        <taxon>Euarchontoglires</taxon>
        <taxon>Primates</taxon>
        <taxon>Haplorrhini</taxon>
        <taxon>Catarrhini</taxon>
        <taxon>Hominidae</taxon>
        <taxon>Homo</taxon>
    </lineage>
</organism>
<proteinExistence type="evidence at protein level"/>
<sequence>MEHVTEGSWESLPVPLHPQVLGALRELGFPYMTPVQSATIPLFMRNKDVAAEAVTGSGKTLAFVIPILEILLRREEKLKKSQVGAIIITPTRELAIQIDEVLSHFTKHFPEFSQILWIGGRNPGEDVERFKQQGGNIIVATPGRLEDMFRRKAEGLDLASCVRSLDVLVLDEADRLLDMGFEASINTILEFLPKQRRTGLFSATQTQEVENLVRAGLRNPVRVSVKEKGVAASSAQKTPSRLENYYMVCKADEKFNQLVHFLRNHKQEKHLVFFSTCACVEYYGKALEVLVKGVKIMCIHGKMKYKRNKIFMEFRKLQSGILVCTDVMARGIDIPEVNWVLQYDPPSNASAFVHRCGRTARIGHGGSALVFLLPMEESYINFLAINQKCPLQEMKPQRNTADLLPKLKSMALADRAVFEKGMKAFVSYVQAYAKHECNLIFRLKDLDFASLARGFALLRMPKMPELRGKQFPDFVPVDVNTDTIPFKDKIREKQRQKLLEQQRREKTENEGRRKFIKNKAWSKQKAKKEKKKKMNEKRKREEGSDIEDEDMEELLNDTRLLKKLKKGKITEEEFEKGLLTTGKRTIKTVDLGISDLEDDC</sequence>
<evidence type="ECO:0000255" key="1">
    <source>
        <dbReference type="PROSITE-ProRule" id="PRU00541"/>
    </source>
</evidence>
<evidence type="ECO:0000255" key="2">
    <source>
        <dbReference type="PROSITE-ProRule" id="PRU00542"/>
    </source>
</evidence>
<evidence type="ECO:0000256" key="3">
    <source>
        <dbReference type="SAM" id="MobiDB-lite"/>
    </source>
</evidence>
<evidence type="ECO:0000269" key="4">
    <source>
    </source>
</evidence>
<evidence type="ECO:0000269" key="5">
    <source>
    </source>
</evidence>
<evidence type="ECO:0000303" key="6">
    <source>
    </source>
</evidence>
<evidence type="ECO:0000305" key="7"/>
<evidence type="ECO:0000305" key="8">
    <source>
    </source>
</evidence>
<evidence type="ECO:0000312" key="9">
    <source>
        <dbReference type="HGNC" id="HGNC:20085"/>
    </source>
</evidence>
<evidence type="ECO:0007744" key="10">
    <source>
    </source>
</evidence>
<evidence type="ECO:0007744" key="11">
    <source>
    </source>
</evidence>
<evidence type="ECO:0007744" key="12">
    <source>
    </source>
</evidence>
<evidence type="ECO:0007744" key="13">
    <source>
    </source>
</evidence>
<evidence type="ECO:0007744" key="14">
    <source>
    </source>
</evidence>
<evidence type="ECO:0007744" key="15">
    <source>
    </source>
</evidence>
<accession>Q8NHQ9</accession>
<accession>Q658L6</accession>
<accession>Q8IYH0</accession>
<accession>Q9HCH7</accession>
<name>DDX55_HUMAN</name>
<protein>
    <recommendedName>
        <fullName>ATP-dependent RNA helicase DDX55</fullName>
        <ecNumber evidence="8">3.6.4.13</ecNumber>
    </recommendedName>
    <alternativeName>
        <fullName>DEAD box protein 55</fullName>
    </alternativeName>
</protein>
<reference key="1">
    <citation type="journal article" date="2006" name="Nature">
        <title>The finished DNA sequence of human chromosome 12.</title>
        <authorList>
            <person name="Scherer S.E."/>
            <person name="Muzny D.M."/>
            <person name="Buhay C.J."/>
            <person name="Chen R."/>
            <person name="Cree A."/>
            <person name="Ding Y."/>
            <person name="Dugan-Rocha S."/>
            <person name="Gill R."/>
            <person name="Gunaratne P."/>
            <person name="Harris R.A."/>
            <person name="Hawes A.C."/>
            <person name="Hernandez J."/>
            <person name="Hodgson A.V."/>
            <person name="Hume J."/>
            <person name="Jackson A."/>
            <person name="Khan Z.M."/>
            <person name="Kovar-Smith C."/>
            <person name="Lewis L.R."/>
            <person name="Lozado R.J."/>
            <person name="Metzker M.L."/>
            <person name="Milosavljevic A."/>
            <person name="Miner G.R."/>
            <person name="Montgomery K.T."/>
            <person name="Morgan M.B."/>
            <person name="Nazareth L.V."/>
            <person name="Scott G."/>
            <person name="Sodergren E."/>
            <person name="Song X.-Z."/>
            <person name="Steffen D."/>
            <person name="Lovering R.C."/>
            <person name="Wheeler D.A."/>
            <person name="Worley K.C."/>
            <person name="Yuan Y."/>
            <person name="Zhang Z."/>
            <person name="Adams C.Q."/>
            <person name="Ansari-Lari M.A."/>
            <person name="Ayele M."/>
            <person name="Brown M.J."/>
            <person name="Chen G."/>
            <person name="Chen Z."/>
            <person name="Clerc-Blankenburg K.P."/>
            <person name="Davis C."/>
            <person name="Delgado O."/>
            <person name="Dinh H.H."/>
            <person name="Draper H."/>
            <person name="Gonzalez-Garay M.L."/>
            <person name="Havlak P."/>
            <person name="Jackson L.R."/>
            <person name="Jacob L.S."/>
            <person name="Kelly S.H."/>
            <person name="Li L."/>
            <person name="Li Z."/>
            <person name="Liu J."/>
            <person name="Liu W."/>
            <person name="Lu J."/>
            <person name="Maheshwari M."/>
            <person name="Nguyen B.-V."/>
            <person name="Okwuonu G.O."/>
            <person name="Pasternak S."/>
            <person name="Perez L.M."/>
            <person name="Plopper F.J.H."/>
            <person name="Santibanez J."/>
            <person name="Shen H."/>
            <person name="Tabor P.E."/>
            <person name="Verduzco D."/>
            <person name="Waldron L."/>
            <person name="Wang Q."/>
            <person name="Williams G.A."/>
            <person name="Zhang J."/>
            <person name="Zhou J."/>
            <person name="Allen C.C."/>
            <person name="Amin A.G."/>
            <person name="Anyalebechi V."/>
            <person name="Bailey M."/>
            <person name="Barbaria J.A."/>
            <person name="Bimage K.E."/>
            <person name="Bryant N.P."/>
            <person name="Burch P.E."/>
            <person name="Burkett C.E."/>
            <person name="Burrell K.L."/>
            <person name="Calderon E."/>
            <person name="Cardenas V."/>
            <person name="Carter K."/>
            <person name="Casias K."/>
            <person name="Cavazos I."/>
            <person name="Cavazos S.R."/>
            <person name="Ceasar H."/>
            <person name="Chacko J."/>
            <person name="Chan S.N."/>
            <person name="Chavez D."/>
            <person name="Christopoulos C."/>
            <person name="Chu J."/>
            <person name="Cockrell R."/>
            <person name="Cox C.D."/>
            <person name="Dang M."/>
            <person name="Dathorne S.R."/>
            <person name="David R."/>
            <person name="Davis C.M."/>
            <person name="Davy-Carroll L."/>
            <person name="Deshazo D.R."/>
            <person name="Donlin J.E."/>
            <person name="D'Souza L."/>
            <person name="Eaves K.A."/>
            <person name="Egan A."/>
            <person name="Emery-Cohen A.J."/>
            <person name="Escotto M."/>
            <person name="Flagg N."/>
            <person name="Forbes L.D."/>
            <person name="Gabisi A.M."/>
            <person name="Garza M."/>
            <person name="Hamilton C."/>
            <person name="Henderson N."/>
            <person name="Hernandez O."/>
            <person name="Hines S."/>
            <person name="Hogues M.E."/>
            <person name="Huang M."/>
            <person name="Idlebird D.G."/>
            <person name="Johnson R."/>
            <person name="Jolivet A."/>
            <person name="Jones S."/>
            <person name="Kagan R."/>
            <person name="King L.M."/>
            <person name="Leal B."/>
            <person name="Lebow H."/>
            <person name="Lee S."/>
            <person name="LeVan J.M."/>
            <person name="Lewis L.C."/>
            <person name="London P."/>
            <person name="Lorensuhewa L.M."/>
            <person name="Loulseged H."/>
            <person name="Lovett D.A."/>
            <person name="Lucier A."/>
            <person name="Lucier R.L."/>
            <person name="Ma J."/>
            <person name="Madu R.C."/>
            <person name="Mapua P."/>
            <person name="Martindale A.D."/>
            <person name="Martinez E."/>
            <person name="Massey E."/>
            <person name="Mawhiney S."/>
            <person name="Meador M.G."/>
            <person name="Mendez S."/>
            <person name="Mercado C."/>
            <person name="Mercado I.C."/>
            <person name="Merritt C.E."/>
            <person name="Miner Z.L."/>
            <person name="Minja E."/>
            <person name="Mitchell T."/>
            <person name="Mohabbat F."/>
            <person name="Mohabbat K."/>
            <person name="Montgomery B."/>
            <person name="Moore N."/>
            <person name="Morris S."/>
            <person name="Munidasa M."/>
            <person name="Ngo R.N."/>
            <person name="Nguyen N.B."/>
            <person name="Nickerson E."/>
            <person name="Nwaokelemeh O.O."/>
            <person name="Nwokenkwo S."/>
            <person name="Obregon M."/>
            <person name="Oguh M."/>
            <person name="Oragunye N."/>
            <person name="Oviedo R.J."/>
            <person name="Parish B.J."/>
            <person name="Parker D.N."/>
            <person name="Parrish J."/>
            <person name="Parks K.L."/>
            <person name="Paul H.A."/>
            <person name="Payton B.A."/>
            <person name="Perez A."/>
            <person name="Perrin W."/>
            <person name="Pickens A."/>
            <person name="Primus E.L."/>
            <person name="Pu L.-L."/>
            <person name="Puazo M."/>
            <person name="Quiles M.M."/>
            <person name="Quiroz J.B."/>
            <person name="Rabata D."/>
            <person name="Reeves K."/>
            <person name="Ruiz S.J."/>
            <person name="Shao H."/>
            <person name="Sisson I."/>
            <person name="Sonaike T."/>
            <person name="Sorelle R.P."/>
            <person name="Sutton A.E."/>
            <person name="Svatek A.F."/>
            <person name="Svetz L.A."/>
            <person name="Tamerisa K.S."/>
            <person name="Taylor T.R."/>
            <person name="Teague B."/>
            <person name="Thomas N."/>
            <person name="Thorn R.D."/>
            <person name="Trejos Z.Y."/>
            <person name="Trevino B.K."/>
            <person name="Ukegbu O.N."/>
            <person name="Urban J.B."/>
            <person name="Vasquez L.I."/>
            <person name="Vera V.A."/>
            <person name="Villasana D.M."/>
            <person name="Wang L."/>
            <person name="Ward-Moore S."/>
            <person name="Warren J.T."/>
            <person name="Wei X."/>
            <person name="White F."/>
            <person name="Williamson A.L."/>
            <person name="Wleczyk R."/>
            <person name="Wooden H.S."/>
            <person name="Wooden S.H."/>
            <person name="Yen J."/>
            <person name="Yoon L."/>
            <person name="Yoon V."/>
            <person name="Zorrilla S.E."/>
            <person name="Nelson D."/>
            <person name="Kucherlapati R."/>
            <person name="Weinstock G."/>
            <person name="Gibbs R.A."/>
        </authorList>
    </citation>
    <scope>NUCLEOTIDE SEQUENCE [LARGE SCALE GENOMIC DNA]</scope>
</reference>
<reference key="2">
    <citation type="journal article" date="2004" name="Genome Res.">
        <title>The status, quality, and expansion of the NIH full-length cDNA project: the Mammalian Gene Collection (MGC).</title>
        <authorList>
            <consortium name="The MGC Project Team"/>
        </authorList>
    </citation>
    <scope>NUCLEOTIDE SEQUENCE [LARGE SCALE MRNA] (ISOFORMS 1 AND 2)</scope>
    <source>
        <tissue>Testis</tissue>
    </source>
</reference>
<reference key="3">
    <citation type="journal article" date="2007" name="BMC Genomics">
        <title>The full-ORF clone resource of the German cDNA consortium.</title>
        <authorList>
            <person name="Bechtel S."/>
            <person name="Rosenfelder H."/>
            <person name="Duda A."/>
            <person name="Schmidt C.P."/>
            <person name="Ernst U."/>
            <person name="Wellenreuther R."/>
            <person name="Mehrle A."/>
            <person name="Schuster C."/>
            <person name="Bahr A."/>
            <person name="Bloecker H."/>
            <person name="Heubner D."/>
            <person name="Hoerlein A."/>
            <person name="Michel G."/>
            <person name="Wedler H."/>
            <person name="Koehrer K."/>
            <person name="Ottenwaelder B."/>
            <person name="Poustka A."/>
            <person name="Wiemann S."/>
            <person name="Schupp I."/>
        </authorList>
    </citation>
    <scope>NUCLEOTIDE SEQUENCE [LARGE SCALE MRNA] OF 1-532 (ISOFORM 1)</scope>
    <scope>VARIANT SER-264</scope>
    <source>
        <tissue>Stomach</tissue>
    </source>
</reference>
<reference key="4">
    <citation type="journal article" date="2000" name="DNA Res.">
        <title>Prediction of the coding sequences of unidentified human genes. XVIII. The complete sequences of 100 new cDNA clones from brain which code for large proteins in vitro.</title>
        <authorList>
            <person name="Nagase T."/>
            <person name="Kikuno R."/>
            <person name="Nakayama M."/>
            <person name="Hirosawa M."/>
            <person name="Ohara O."/>
        </authorList>
    </citation>
    <scope>NUCLEOTIDE SEQUENCE [LARGE SCALE MRNA] OF 130-600 (ISOFORM 1)</scope>
</reference>
<reference key="5">
    <citation type="journal article" date="2008" name="J. Proteome Res.">
        <title>Combining protein-based IMAC, peptide-based IMAC, and MudPIT for efficient phosphoproteomic analysis.</title>
        <authorList>
            <person name="Cantin G.T."/>
            <person name="Yi W."/>
            <person name="Lu B."/>
            <person name="Park S.K."/>
            <person name="Xu T."/>
            <person name="Lee J.-D."/>
            <person name="Yates J.R. III"/>
        </authorList>
    </citation>
    <scope>PHOSPHORYLATION [LARGE SCALE ANALYSIS] AT SER-544</scope>
    <scope>IDENTIFICATION BY MASS SPECTROMETRY [LARGE SCALE ANALYSIS]</scope>
    <source>
        <tissue>Cervix carcinoma</tissue>
    </source>
</reference>
<reference key="6">
    <citation type="journal article" date="2008" name="Proc. Natl. Acad. Sci. U.S.A.">
        <title>A quantitative atlas of mitotic phosphorylation.</title>
        <authorList>
            <person name="Dephoure N."/>
            <person name="Zhou C."/>
            <person name="Villen J."/>
            <person name="Beausoleil S.A."/>
            <person name="Bakalarski C.E."/>
            <person name="Elledge S.J."/>
            <person name="Gygi S.P."/>
        </authorList>
    </citation>
    <scope>PHOSPHORYLATION [LARGE SCALE ANALYSIS] AT SER-544 AND SER-594</scope>
    <scope>IDENTIFICATION BY MASS SPECTROMETRY [LARGE SCALE ANALYSIS]</scope>
    <source>
        <tissue>Cervix carcinoma</tissue>
    </source>
</reference>
<reference key="7">
    <citation type="journal article" date="2009" name="Sci. Signal.">
        <title>Quantitative phosphoproteomic analysis of T cell receptor signaling reveals system-wide modulation of protein-protein interactions.</title>
        <authorList>
            <person name="Mayya V."/>
            <person name="Lundgren D.H."/>
            <person name="Hwang S.-I."/>
            <person name="Rezaul K."/>
            <person name="Wu L."/>
            <person name="Eng J.K."/>
            <person name="Rodionov V."/>
            <person name="Han D.K."/>
        </authorList>
    </citation>
    <scope>PHOSPHORYLATION [LARGE SCALE ANALYSIS] AT SER-544</scope>
    <scope>IDENTIFICATION BY MASS SPECTROMETRY [LARGE SCALE ANALYSIS]</scope>
    <source>
        <tissue>Leukemic T-cell</tissue>
    </source>
</reference>
<reference key="8">
    <citation type="journal article" date="2010" name="Sci. Signal.">
        <title>Quantitative phosphoproteomics reveals widespread full phosphorylation site occupancy during mitosis.</title>
        <authorList>
            <person name="Olsen J.V."/>
            <person name="Vermeulen M."/>
            <person name="Santamaria A."/>
            <person name="Kumar C."/>
            <person name="Miller M.L."/>
            <person name="Jensen L.J."/>
            <person name="Gnad F."/>
            <person name="Cox J."/>
            <person name="Jensen T.S."/>
            <person name="Nigg E.A."/>
            <person name="Brunak S."/>
            <person name="Mann M."/>
        </authorList>
    </citation>
    <scope>PHOSPHORYLATION [LARGE SCALE ANALYSIS] AT SER-544</scope>
    <scope>IDENTIFICATION BY MASS SPECTROMETRY [LARGE SCALE ANALYSIS]</scope>
    <source>
        <tissue>Cervix carcinoma</tissue>
    </source>
</reference>
<reference key="9">
    <citation type="journal article" date="2011" name="BMC Syst. Biol.">
        <title>Initial characterization of the human central proteome.</title>
        <authorList>
            <person name="Burkard T.R."/>
            <person name="Planyavsky M."/>
            <person name="Kaupe I."/>
            <person name="Breitwieser F.P."/>
            <person name="Buerckstuemmer T."/>
            <person name="Bennett K.L."/>
            <person name="Superti-Furga G."/>
            <person name="Colinge J."/>
        </authorList>
    </citation>
    <scope>IDENTIFICATION BY MASS SPECTROMETRY [LARGE SCALE ANALYSIS]</scope>
</reference>
<reference key="10">
    <citation type="journal article" date="2011" name="Sci. Signal.">
        <title>System-wide temporal characterization of the proteome and phosphoproteome of human embryonic stem cell differentiation.</title>
        <authorList>
            <person name="Rigbolt K.T."/>
            <person name="Prokhorova T.A."/>
            <person name="Akimov V."/>
            <person name="Henningsen J."/>
            <person name="Johansen P.T."/>
            <person name="Kratchmarova I."/>
            <person name="Kassem M."/>
            <person name="Mann M."/>
            <person name="Olsen J.V."/>
            <person name="Blagoev B."/>
        </authorList>
    </citation>
    <scope>PHOSPHORYLATION [LARGE SCALE ANALYSIS] AT SER-544</scope>
    <scope>IDENTIFICATION BY MASS SPECTROMETRY [LARGE SCALE ANALYSIS]</scope>
</reference>
<reference key="11">
    <citation type="journal article" date="2013" name="J. Proteome Res.">
        <title>Toward a comprehensive characterization of a human cancer cell phosphoproteome.</title>
        <authorList>
            <person name="Zhou H."/>
            <person name="Di Palma S."/>
            <person name="Preisinger C."/>
            <person name="Peng M."/>
            <person name="Polat A.N."/>
            <person name="Heck A.J."/>
            <person name="Mohammed S."/>
        </authorList>
    </citation>
    <scope>PHOSPHORYLATION [LARGE SCALE ANALYSIS] AT SER-544</scope>
    <scope>IDENTIFICATION BY MASS SPECTROMETRY [LARGE SCALE ANALYSIS]</scope>
    <source>
        <tissue>Cervix carcinoma</tissue>
        <tissue>Erythroleukemia</tissue>
    </source>
</reference>
<reference key="12">
    <citation type="journal article" date="2021" name="RNA Biol.">
        <title>The DExD box ATPase DDX55 is recruited to domain IV of the 28S ribosomal RNA by its C-terminal region.</title>
        <authorList>
            <person name="Choudhury P."/>
            <person name="Kretschmer J."/>
            <person name="Hackert P."/>
            <person name="Bohnsack K.E."/>
            <person name="Bohnsack M.T."/>
        </authorList>
    </citation>
    <scope>FUNCTION</scope>
    <scope>CATALYTIC ACTIVITY</scope>
    <scope>SUBCELLULAR LOCATION</scope>
    <scope>SUBUNIT</scope>
    <scope>MUTAGENESIS OF THR-60</scope>
</reference>
<keyword id="KW-0025">Alternative splicing</keyword>
<keyword id="KW-0067">ATP-binding</keyword>
<keyword id="KW-0347">Helicase</keyword>
<keyword id="KW-0378">Hydrolase</keyword>
<keyword id="KW-0547">Nucleotide-binding</keyword>
<keyword id="KW-0539">Nucleus</keyword>
<keyword id="KW-0597">Phosphoprotein</keyword>
<keyword id="KW-1267">Proteomics identification</keyword>
<keyword id="KW-1185">Reference proteome</keyword>
<keyword id="KW-0690">Ribosome biogenesis</keyword>
<keyword id="KW-0694">RNA-binding</keyword>
<keyword id="KW-0698">rRNA processing</keyword>
<keyword id="KW-0699">rRNA-binding</keyword>
<comment type="function">
    <text evidence="5">Probable ATP-binding RNA helicase. Has ATPase activity and is involved in the maturation of precursor large subunit rRNAs (PubMed:33048000).</text>
</comment>
<comment type="catalytic activity">
    <reaction evidence="8">
        <text>ATP + H2O = ADP + phosphate + H(+)</text>
        <dbReference type="Rhea" id="RHEA:13065"/>
        <dbReference type="ChEBI" id="CHEBI:15377"/>
        <dbReference type="ChEBI" id="CHEBI:15378"/>
        <dbReference type="ChEBI" id="CHEBI:30616"/>
        <dbReference type="ChEBI" id="CHEBI:43474"/>
        <dbReference type="ChEBI" id="CHEBI:456216"/>
        <dbReference type="EC" id="3.6.4.13"/>
    </reaction>
</comment>
<comment type="subunit">
    <text evidence="5">Interacts with 28S rRNA (PubMed:33048000). Interacts with double-stranded RNA substrates in vitro; the interaction stimulates ATPase activity.</text>
</comment>
<comment type="interaction">
    <interactant intactId="EBI-5459844">
        <id>Q8NHQ9</id>
    </interactant>
    <interactant intactId="EBI-741181">
        <id>Q6RW13</id>
        <label>AGTRAP</label>
    </interactant>
    <organismsDiffer>false</organismsDiffer>
    <experiments>3</experiments>
</comment>
<comment type="interaction">
    <interactant intactId="EBI-5459844">
        <id>Q8NHQ9</id>
    </interactant>
    <interactant intactId="EBI-10171774">
        <id>P60410</id>
        <label>KRTAP10-8</label>
    </interactant>
    <organismsDiffer>false</organismsDiffer>
    <experiments>3</experiments>
</comment>
<comment type="interaction">
    <interactant intactId="EBI-5459844">
        <id>Q8NHQ9</id>
    </interactant>
    <interactant intactId="EBI-79165">
        <id>Q9NRD5</id>
        <label>PICK1</label>
    </interactant>
    <organismsDiffer>false</organismsDiffer>
    <experiments>3</experiments>
</comment>
<comment type="subcellular location">
    <subcellularLocation>
        <location evidence="5">Nucleus</location>
        <location evidence="5">Nucleoplasm</location>
    </subcellularLocation>
</comment>
<comment type="alternative products">
    <event type="alternative splicing"/>
    <isoform>
        <id>Q8NHQ9-1</id>
        <name>1</name>
        <sequence type="displayed"/>
    </isoform>
    <isoform>
        <id>Q8NHQ9-2</id>
        <name>2</name>
        <sequence type="described" ref="VSP_056155"/>
    </isoform>
</comment>
<comment type="domain">
    <text>The Q motif is unique to and characteristic of the DEAD box family of RNA helicases and controls ATP binding and hydrolysis.</text>
</comment>
<comment type="domain">
    <text evidence="5">The C-terminal region is required for DDX55 nuclear import and association with pre-ribosomal complexes.</text>
</comment>
<comment type="similarity">
    <text evidence="7">Belongs to the DEAD box helicase family. DDX55/SPB4 subfamily.</text>
</comment>
<feature type="chain" id="PRO_0000252210" description="ATP-dependent RNA helicase DDX55">
    <location>
        <begin position="1"/>
        <end position="600"/>
    </location>
</feature>
<feature type="domain" description="Helicase ATP-binding" evidence="1">
    <location>
        <begin position="40"/>
        <end position="223"/>
    </location>
</feature>
<feature type="domain" description="Helicase C-terminal" evidence="2">
    <location>
        <begin position="254"/>
        <end position="402"/>
    </location>
</feature>
<feature type="region of interest" description="Disordered" evidence="3">
    <location>
        <begin position="500"/>
        <end position="550"/>
    </location>
</feature>
<feature type="region of interest" description="Important for nuclear localization" evidence="5">
    <location>
        <begin position="533"/>
        <end position="562"/>
    </location>
</feature>
<feature type="short sequence motif" description="Q motif">
    <location>
        <begin position="9"/>
        <end position="37"/>
    </location>
</feature>
<feature type="short sequence motif" description="DEAD box">
    <location>
        <begin position="171"/>
        <end position="174"/>
    </location>
</feature>
<feature type="compositionally biased region" description="Basic and acidic residues" evidence="3">
    <location>
        <begin position="500"/>
        <end position="513"/>
    </location>
</feature>
<feature type="compositionally biased region" description="Basic residues" evidence="3">
    <location>
        <begin position="514"/>
        <end position="537"/>
    </location>
</feature>
<feature type="binding site" evidence="1">
    <location>
        <begin position="53"/>
        <end position="60"/>
    </location>
    <ligand>
        <name>ATP</name>
        <dbReference type="ChEBI" id="CHEBI:30616"/>
    </ligand>
</feature>
<feature type="modified residue" description="Phosphoserine" evidence="10 11 12 13 14 15">
    <location>
        <position position="544"/>
    </location>
</feature>
<feature type="modified residue" description="Phosphoserine" evidence="11">
    <location>
        <position position="594"/>
    </location>
</feature>
<feature type="splice variant" id="VSP_056155" description="In isoform 2." evidence="6">
    <location>
        <begin position="1"/>
        <end position="393"/>
    </location>
</feature>
<feature type="sequence variant" id="VAR_027789" description="In dbSNP:rs17881657.">
    <original>V</original>
    <variation>L</variation>
    <location>
        <position position="101"/>
    </location>
</feature>
<feature type="sequence variant" id="VAR_027790" description="In dbSNP:rs17886035.">
    <original>E</original>
    <variation>G</variation>
    <location>
        <position position="154"/>
    </location>
</feature>
<feature type="sequence variant" id="VAR_027791" description="In dbSNP:rs11057306." evidence="4">
    <original>N</original>
    <variation>S</variation>
    <location>
        <position position="264"/>
    </location>
</feature>
<feature type="sequence variant" id="VAR_027792" description="In dbSNP:rs10773019.">
    <original>N</original>
    <variation>S</variation>
    <location>
        <position position="556"/>
    </location>
</feature>
<feature type="mutagenesis site" description="Loss of ATPase activity." evidence="5">
    <original>T</original>
    <variation>A</variation>
    <location>
        <position position="60"/>
    </location>
</feature>
<feature type="sequence conflict" description="In Ref. 4; BAB13421." evidence="7" ref="4">
    <original>FKQQG</original>
    <variation>LSFQS</variation>
    <location>
        <begin position="130"/>
        <end position="134"/>
    </location>
</feature>
<feature type="sequence conflict" description="In Ref. 2; AAH30020." evidence="7" ref="2">
    <original>M</original>
    <variation>L</variation>
    <location>
        <position position="148"/>
    </location>
</feature>
<feature type="sequence conflict" description="In Ref. 2; AAH30020." evidence="7" ref="2">
    <original>A</original>
    <variation>T</variation>
    <location>
        <position position="286"/>
    </location>
</feature>
<feature type="sequence conflict" description="In Ref. 3; CAH56233." evidence="7" ref="3">
    <original>DLDFAS</original>
    <variation>G</variation>
    <location>
        <begin position="445"/>
        <end position="450"/>
    </location>
</feature>
<feature type="sequence conflict" description="In Ref. 2; AAH30020." evidence="7" ref="2">
    <original>D</original>
    <variation>G</variation>
    <location>
        <position position="599"/>
    </location>
</feature>